<sequence length="232" mass="23920">MTATKMNAQEIIQFIANAEKKTSVKVTFEGQLATAVPSSVVKLGNVLFGDWKDVAPLLEGLVENQDYVVEQDARNSAVPLLDKRAINARIEPGAIIRDQVEIGDNAVIMMGAVINIGAEIGAGTMIDMGAILGGRAIVGKNSHVGAGAVLAGVIEPASAEPVRVGDNVLIGANAVVIEGVQIGSGSVVAAGAIVTQDVPENVVVAGVPARIIKEIDAQTQQKTALEDALRTL</sequence>
<protein>
    <recommendedName>
        <fullName evidence="1">2,3,4,5-tetrahydropyridine-2,6-dicarboxylate N-acetyltransferase</fullName>
        <ecNumber evidence="1">2.3.1.89</ecNumber>
    </recommendedName>
    <alternativeName>
        <fullName evidence="1">Tetrahydrodipicolinate N-acetyltransferase</fullName>
        <shortName evidence="1">THP acetyltransferase</shortName>
        <shortName evidence="1">Tetrahydropicolinate acetylase</shortName>
    </alternativeName>
</protein>
<comment type="function">
    <text evidence="1">Catalyzes the transfer of an acetyl group from acetyl-CoA to tetrahydrodipicolinate.</text>
</comment>
<comment type="catalytic activity">
    <reaction evidence="1">
        <text>(S)-2,3,4,5-tetrahydrodipicolinate + acetyl-CoA + H2O = L-2-acetamido-6-oxoheptanedioate + CoA</text>
        <dbReference type="Rhea" id="RHEA:13085"/>
        <dbReference type="ChEBI" id="CHEBI:15377"/>
        <dbReference type="ChEBI" id="CHEBI:16845"/>
        <dbReference type="ChEBI" id="CHEBI:57287"/>
        <dbReference type="ChEBI" id="CHEBI:57288"/>
        <dbReference type="ChEBI" id="CHEBI:58117"/>
        <dbReference type="EC" id="2.3.1.89"/>
    </reaction>
</comment>
<comment type="pathway">
    <text evidence="1">Amino-acid biosynthesis; L-lysine biosynthesis via DAP pathway; LL-2,6-diaminopimelate from (S)-tetrahydrodipicolinate (acetylase route): step 1/3.</text>
</comment>
<comment type="similarity">
    <text evidence="1">Belongs to the transferase hexapeptide repeat family. DapH subfamily.</text>
</comment>
<proteinExistence type="inferred from homology"/>
<keyword id="KW-0012">Acyltransferase</keyword>
<keyword id="KW-0028">Amino-acid biosynthesis</keyword>
<keyword id="KW-0220">Diaminopimelate biosynthesis</keyword>
<keyword id="KW-0457">Lysine biosynthesis</keyword>
<keyword id="KW-1185">Reference proteome</keyword>
<keyword id="KW-0677">Repeat</keyword>
<keyword id="KW-0808">Transferase</keyword>
<feature type="chain" id="PRO_0000376714" description="2,3,4,5-tetrahydropyridine-2,6-dicarboxylate N-acetyltransferase">
    <location>
        <begin position="1"/>
        <end position="232"/>
    </location>
</feature>
<reference key="1">
    <citation type="journal article" date="2007" name="J. Bacteriol.">
        <title>Genome sequence of Avery's virulent serotype 2 strain D39 of Streptococcus pneumoniae and comparison with that of unencapsulated laboratory strain R6.</title>
        <authorList>
            <person name="Lanie J.A."/>
            <person name="Ng W.-L."/>
            <person name="Kazmierczak K.M."/>
            <person name="Andrzejewski T.M."/>
            <person name="Davidsen T.M."/>
            <person name="Wayne K.J."/>
            <person name="Tettelin H."/>
            <person name="Glass J.I."/>
            <person name="Winkler M.E."/>
        </authorList>
    </citation>
    <scope>NUCLEOTIDE SEQUENCE [LARGE SCALE GENOMIC DNA]</scope>
    <source>
        <strain>D39 / NCTC 7466</strain>
    </source>
</reference>
<name>DAPH_STRP2</name>
<organism>
    <name type="scientific">Streptococcus pneumoniae serotype 2 (strain D39 / NCTC 7466)</name>
    <dbReference type="NCBI Taxonomy" id="373153"/>
    <lineage>
        <taxon>Bacteria</taxon>
        <taxon>Bacillati</taxon>
        <taxon>Bacillota</taxon>
        <taxon>Bacilli</taxon>
        <taxon>Lactobacillales</taxon>
        <taxon>Streptococcaceae</taxon>
        <taxon>Streptococcus</taxon>
    </lineage>
</organism>
<accession>Q04I77</accession>
<gene>
    <name evidence="1" type="primary">dapH</name>
    <name type="ordered locus">SPD_1923</name>
</gene>
<dbReference type="EC" id="2.3.1.89" evidence="1"/>
<dbReference type="EMBL" id="CP000410">
    <property type="protein sequence ID" value="ABJ54944.1"/>
    <property type="molecule type" value="Genomic_DNA"/>
</dbReference>
<dbReference type="SMR" id="Q04I77"/>
<dbReference type="PaxDb" id="373153-SPD_1923"/>
<dbReference type="KEGG" id="spd:SPD_1923"/>
<dbReference type="eggNOG" id="COG2171">
    <property type="taxonomic scope" value="Bacteria"/>
</dbReference>
<dbReference type="HOGENOM" id="CLU_103751_0_0_9"/>
<dbReference type="BioCyc" id="SPNE373153:G1G6V-2067-MONOMER"/>
<dbReference type="UniPathway" id="UPA00034">
    <property type="reaction ID" value="UER00022"/>
</dbReference>
<dbReference type="Proteomes" id="UP000001452">
    <property type="component" value="Chromosome"/>
</dbReference>
<dbReference type="GO" id="GO:0047200">
    <property type="term" value="F:tetrahydrodipicolinate N-acetyltransferase activity"/>
    <property type="evidence" value="ECO:0007669"/>
    <property type="project" value="UniProtKB-EC"/>
</dbReference>
<dbReference type="GO" id="GO:0019877">
    <property type="term" value="P:diaminopimelate biosynthetic process"/>
    <property type="evidence" value="ECO:0007669"/>
    <property type="project" value="UniProtKB-UniRule"/>
</dbReference>
<dbReference type="GO" id="GO:0009089">
    <property type="term" value="P:lysine biosynthetic process via diaminopimelate"/>
    <property type="evidence" value="ECO:0007669"/>
    <property type="project" value="UniProtKB-UniRule"/>
</dbReference>
<dbReference type="Gene3D" id="2.160.10.10">
    <property type="entry name" value="Hexapeptide repeat proteins"/>
    <property type="match status" value="1"/>
</dbReference>
<dbReference type="Gene3D" id="3.30.70.250">
    <property type="entry name" value="Malonyl-CoA ACP transacylase, ACP-binding"/>
    <property type="match status" value="1"/>
</dbReference>
<dbReference type="HAMAP" id="MF_01691">
    <property type="entry name" value="DapH"/>
    <property type="match status" value="1"/>
</dbReference>
<dbReference type="InterPro" id="IPR019873">
    <property type="entry name" value="DapH"/>
</dbReference>
<dbReference type="InterPro" id="IPR013710">
    <property type="entry name" value="DapH_N"/>
</dbReference>
<dbReference type="InterPro" id="IPR001451">
    <property type="entry name" value="Hexapep"/>
</dbReference>
<dbReference type="InterPro" id="IPR018357">
    <property type="entry name" value="Hexapep_transf_CS"/>
</dbReference>
<dbReference type="InterPro" id="IPR050179">
    <property type="entry name" value="Trans_hexapeptide_repeat"/>
</dbReference>
<dbReference type="InterPro" id="IPR011004">
    <property type="entry name" value="Trimer_LpxA-like_sf"/>
</dbReference>
<dbReference type="NCBIfam" id="TIGR03532">
    <property type="entry name" value="DapD_Ac"/>
    <property type="match status" value="1"/>
</dbReference>
<dbReference type="PANTHER" id="PTHR43300:SF10">
    <property type="entry name" value="2,3,4,5-TETRAHYDROPYRIDINE-2,6-DICARBOXYLATE N-ACETYLTRANSFERASE"/>
    <property type="match status" value="1"/>
</dbReference>
<dbReference type="PANTHER" id="PTHR43300">
    <property type="entry name" value="ACETYLTRANSFERASE"/>
    <property type="match status" value="1"/>
</dbReference>
<dbReference type="Pfam" id="PF08503">
    <property type="entry name" value="DapH_N"/>
    <property type="match status" value="1"/>
</dbReference>
<dbReference type="Pfam" id="PF00132">
    <property type="entry name" value="Hexapep"/>
    <property type="match status" value="1"/>
</dbReference>
<dbReference type="Pfam" id="PF14602">
    <property type="entry name" value="Hexapep_2"/>
    <property type="match status" value="2"/>
</dbReference>
<dbReference type="SUPFAM" id="SSF51161">
    <property type="entry name" value="Trimeric LpxA-like enzymes"/>
    <property type="match status" value="1"/>
</dbReference>
<dbReference type="PROSITE" id="PS00101">
    <property type="entry name" value="HEXAPEP_TRANSFERASES"/>
    <property type="match status" value="2"/>
</dbReference>
<evidence type="ECO:0000255" key="1">
    <source>
        <dbReference type="HAMAP-Rule" id="MF_01691"/>
    </source>
</evidence>